<reference key="1">
    <citation type="journal article" date="2005" name="Nature">
        <title>The genome of the social amoeba Dictyostelium discoideum.</title>
        <authorList>
            <person name="Eichinger L."/>
            <person name="Pachebat J.A."/>
            <person name="Gloeckner G."/>
            <person name="Rajandream M.A."/>
            <person name="Sucgang R."/>
            <person name="Berriman M."/>
            <person name="Song J."/>
            <person name="Olsen R."/>
            <person name="Szafranski K."/>
            <person name="Xu Q."/>
            <person name="Tunggal B."/>
            <person name="Kummerfeld S."/>
            <person name="Madera M."/>
            <person name="Konfortov B.A."/>
            <person name="Rivero F."/>
            <person name="Bankier A.T."/>
            <person name="Lehmann R."/>
            <person name="Hamlin N."/>
            <person name="Davies R."/>
            <person name="Gaudet P."/>
            <person name="Fey P."/>
            <person name="Pilcher K."/>
            <person name="Chen G."/>
            <person name="Saunders D."/>
            <person name="Sodergren E.J."/>
            <person name="Davis P."/>
            <person name="Kerhornou A."/>
            <person name="Nie X."/>
            <person name="Hall N."/>
            <person name="Anjard C."/>
            <person name="Hemphill L."/>
            <person name="Bason N."/>
            <person name="Farbrother P."/>
            <person name="Desany B."/>
            <person name="Just E."/>
            <person name="Morio T."/>
            <person name="Rost R."/>
            <person name="Churcher C.M."/>
            <person name="Cooper J."/>
            <person name="Haydock S."/>
            <person name="van Driessche N."/>
            <person name="Cronin A."/>
            <person name="Goodhead I."/>
            <person name="Muzny D.M."/>
            <person name="Mourier T."/>
            <person name="Pain A."/>
            <person name="Lu M."/>
            <person name="Harper D."/>
            <person name="Lindsay R."/>
            <person name="Hauser H."/>
            <person name="James K.D."/>
            <person name="Quiles M."/>
            <person name="Madan Babu M."/>
            <person name="Saito T."/>
            <person name="Buchrieser C."/>
            <person name="Wardroper A."/>
            <person name="Felder M."/>
            <person name="Thangavelu M."/>
            <person name="Johnson D."/>
            <person name="Knights A."/>
            <person name="Loulseged H."/>
            <person name="Mungall K.L."/>
            <person name="Oliver K."/>
            <person name="Price C."/>
            <person name="Quail M.A."/>
            <person name="Urushihara H."/>
            <person name="Hernandez J."/>
            <person name="Rabbinowitsch E."/>
            <person name="Steffen D."/>
            <person name="Sanders M."/>
            <person name="Ma J."/>
            <person name="Kohara Y."/>
            <person name="Sharp S."/>
            <person name="Simmonds M.N."/>
            <person name="Spiegler S."/>
            <person name="Tivey A."/>
            <person name="Sugano S."/>
            <person name="White B."/>
            <person name="Walker D."/>
            <person name="Woodward J.R."/>
            <person name="Winckler T."/>
            <person name="Tanaka Y."/>
            <person name="Shaulsky G."/>
            <person name="Schleicher M."/>
            <person name="Weinstock G.M."/>
            <person name="Rosenthal A."/>
            <person name="Cox E.C."/>
            <person name="Chisholm R.L."/>
            <person name="Gibbs R.A."/>
            <person name="Loomis W.F."/>
            <person name="Platzer M."/>
            <person name="Kay R.R."/>
            <person name="Williams J.G."/>
            <person name="Dear P.H."/>
            <person name="Noegel A.A."/>
            <person name="Barrell B.G."/>
            <person name="Kuspa A."/>
        </authorList>
    </citation>
    <scope>NUCLEOTIDE SEQUENCE [LARGE SCALE GENOMIC DNA]</scope>
    <source>
        <strain>AX4</strain>
    </source>
</reference>
<name>COPZA_DICDI</name>
<feature type="chain" id="PRO_0000328105" description="Probable coatomer subunit zeta-A">
    <location>
        <begin position="1"/>
        <end position="175"/>
    </location>
</feature>
<sequence>MSSFLYTVTSFFILDSSKGERVIAKYYNNDFDTLQKQKAFEKKVFDKTSKVNFGGEITLLDNYLVVYKSFSNIIIYMVGDQNQNEIALLYVLNSFIDTLQNLFENSQINKKLILDGINYTLLTLDEIIDGGIIMESDSAVIADRVGIKAPDNDDLDESINKAVTSVKEQLFNFLK</sequence>
<keyword id="KW-0963">Cytoplasm</keyword>
<keyword id="KW-0968">Cytoplasmic vesicle</keyword>
<keyword id="KW-0931">ER-Golgi transport</keyword>
<keyword id="KW-0333">Golgi apparatus</keyword>
<keyword id="KW-0472">Membrane</keyword>
<keyword id="KW-0653">Protein transport</keyword>
<keyword id="KW-1185">Reference proteome</keyword>
<keyword id="KW-0813">Transport</keyword>
<accession>Q54HD4</accession>
<comment type="function">
    <text evidence="2">The coatomer is a cytosolic protein complex that binds to dilysine motifs and reversibly associates with Golgi non-clathrin-coated vesicles, which further mediate biosynthetic protein transport from the ER, via the Golgi up to the trans Golgi network. Coatomer complex is required for budding from Golgi membranes, and is essential for the retrograde Golgi-to-ER transport of dilysine-tagged proteins (By similarity). The zeta subunit may be involved in regulating the coat assembly and, hence, the rate of biosynthetic protein transport due to its association-dissociation properties with the coatomer complex (By similarity).</text>
</comment>
<comment type="subunit">
    <text evidence="1">Oligomeric complex that consists of at least the alpha, beta, beta', gamma, delta, epsilon and zeta subunits.</text>
</comment>
<comment type="subcellular location">
    <subcellularLocation>
        <location evidence="1">Cytoplasm</location>
    </subcellularLocation>
    <subcellularLocation>
        <location evidence="1">Golgi apparatus membrane</location>
        <topology evidence="1">Peripheral membrane protein</topology>
        <orientation evidence="1">Cytoplasmic side</orientation>
    </subcellularLocation>
    <subcellularLocation>
        <location evidence="1">Cytoplasmic vesicle</location>
        <location evidence="1">COPI-coated vesicle membrane</location>
        <topology evidence="1">Peripheral membrane protein</topology>
        <orientation evidence="1">Cytoplasmic side</orientation>
    </subcellularLocation>
</comment>
<comment type="similarity">
    <text evidence="3">Belongs to the adaptor complexes small subunit family.</text>
</comment>
<dbReference type="EMBL" id="AAFI02000141">
    <property type="protein sequence ID" value="EAL62693.1"/>
    <property type="molecule type" value="Genomic_DNA"/>
</dbReference>
<dbReference type="RefSeq" id="XP_636204.1">
    <property type="nucleotide sequence ID" value="XM_631112.1"/>
</dbReference>
<dbReference type="SMR" id="Q54HD4"/>
<dbReference type="FunCoup" id="Q54HD4">
    <property type="interactions" value="564"/>
</dbReference>
<dbReference type="STRING" id="44689.Q54HD4"/>
<dbReference type="PaxDb" id="44689-DDB0233825"/>
<dbReference type="EnsemblProtists" id="EAL62693">
    <property type="protein sequence ID" value="EAL62693"/>
    <property type="gene ID" value="DDB_G0289523"/>
</dbReference>
<dbReference type="GeneID" id="8627191"/>
<dbReference type="KEGG" id="ddi:DDB_G0289523"/>
<dbReference type="dictyBase" id="DDB_G0289523">
    <property type="gene designation" value="copZa"/>
</dbReference>
<dbReference type="VEuPathDB" id="AmoebaDB:DDB_G0289523"/>
<dbReference type="eggNOG" id="KOG3343">
    <property type="taxonomic scope" value="Eukaryota"/>
</dbReference>
<dbReference type="HOGENOM" id="CLU_086803_2_0_1"/>
<dbReference type="InParanoid" id="Q54HD4"/>
<dbReference type="OMA" id="MNCLFES"/>
<dbReference type="PhylomeDB" id="Q54HD4"/>
<dbReference type="PRO" id="PR:Q54HD4"/>
<dbReference type="Proteomes" id="UP000002195">
    <property type="component" value="Chromosome 5"/>
</dbReference>
<dbReference type="GO" id="GO:0030126">
    <property type="term" value="C:COPI vesicle coat"/>
    <property type="evidence" value="ECO:0000250"/>
    <property type="project" value="UniProtKB"/>
</dbReference>
<dbReference type="GO" id="GO:0000139">
    <property type="term" value="C:Golgi membrane"/>
    <property type="evidence" value="ECO:0007669"/>
    <property type="project" value="UniProtKB-SubCell"/>
</dbReference>
<dbReference type="GO" id="GO:0006891">
    <property type="term" value="P:intra-Golgi vesicle-mediated transport"/>
    <property type="evidence" value="ECO:0000250"/>
    <property type="project" value="UniProtKB"/>
</dbReference>
<dbReference type="GO" id="GO:0006886">
    <property type="term" value="P:intracellular protein transport"/>
    <property type="evidence" value="ECO:0000318"/>
    <property type="project" value="GO_Central"/>
</dbReference>
<dbReference type="GO" id="GO:0006890">
    <property type="term" value="P:retrograde vesicle-mediated transport, Golgi to endoplasmic reticulum"/>
    <property type="evidence" value="ECO:0000318"/>
    <property type="project" value="GO_Central"/>
</dbReference>
<dbReference type="FunFam" id="3.30.450.60:FF:000057">
    <property type="entry name" value="Probable coatomer subunit zeta-A"/>
    <property type="match status" value="1"/>
</dbReference>
<dbReference type="Gene3D" id="3.30.450.60">
    <property type="match status" value="1"/>
</dbReference>
<dbReference type="InterPro" id="IPR022775">
    <property type="entry name" value="AP_mu_sigma_su"/>
</dbReference>
<dbReference type="InterPro" id="IPR039652">
    <property type="entry name" value="Coatomer_zeta"/>
</dbReference>
<dbReference type="InterPro" id="IPR011012">
    <property type="entry name" value="Longin-like_dom_sf"/>
</dbReference>
<dbReference type="PANTHER" id="PTHR11043:SF3">
    <property type="entry name" value="COATOMER SUBUNIT ZETA-A-RELATED"/>
    <property type="match status" value="1"/>
</dbReference>
<dbReference type="PANTHER" id="PTHR11043">
    <property type="entry name" value="ZETA-COAT PROTEIN"/>
    <property type="match status" value="1"/>
</dbReference>
<dbReference type="Pfam" id="PF01217">
    <property type="entry name" value="Clat_adaptor_s"/>
    <property type="match status" value="1"/>
</dbReference>
<dbReference type="SUPFAM" id="SSF64356">
    <property type="entry name" value="SNARE-like"/>
    <property type="match status" value="1"/>
</dbReference>
<organism>
    <name type="scientific">Dictyostelium discoideum</name>
    <name type="common">Social amoeba</name>
    <dbReference type="NCBI Taxonomy" id="44689"/>
    <lineage>
        <taxon>Eukaryota</taxon>
        <taxon>Amoebozoa</taxon>
        <taxon>Evosea</taxon>
        <taxon>Eumycetozoa</taxon>
        <taxon>Dictyostelia</taxon>
        <taxon>Dictyosteliales</taxon>
        <taxon>Dictyosteliaceae</taxon>
        <taxon>Dictyostelium</taxon>
    </lineage>
</organism>
<evidence type="ECO:0000250" key="1"/>
<evidence type="ECO:0000250" key="2">
    <source>
        <dbReference type="UniProtKB" id="P53600"/>
    </source>
</evidence>
<evidence type="ECO:0000305" key="3"/>
<protein>
    <recommendedName>
        <fullName>Probable coatomer subunit zeta-A</fullName>
    </recommendedName>
    <alternativeName>
        <fullName>Zeta-A-coat protein</fullName>
        <shortName>Zeta-A COP</shortName>
    </alternativeName>
</protein>
<proteinExistence type="inferred from homology"/>
<gene>
    <name type="primary">copZa</name>
    <name type="synonym">copz1</name>
    <name type="ORF">DDB_G0289523</name>
</gene>